<proteinExistence type="evidence at protein level"/>
<dbReference type="EMBL" id="L77117">
    <property type="protein sequence ID" value="AAB98452.1"/>
    <property type="molecule type" value="Genomic_DNA"/>
</dbReference>
<dbReference type="PIR" id="G64357">
    <property type="entry name" value="G64357"/>
</dbReference>
<dbReference type="PDB" id="4MO0">
    <property type="method" value="X-ray"/>
    <property type="resolution" value="2.10 A"/>
    <property type="chains" value="A=2-103"/>
</dbReference>
<dbReference type="PDB" id="5JB3">
    <property type="method" value="EM"/>
    <property type="resolution" value="5.34 A"/>
    <property type="chains" value="1=2-103"/>
</dbReference>
<dbReference type="PDB" id="5JBH">
    <property type="method" value="EM"/>
    <property type="resolution" value="5.34 A"/>
    <property type="chains" value="1=2-103"/>
</dbReference>
<dbReference type="PDBsum" id="4MO0"/>
<dbReference type="PDBsum" id="5JB3"/>
<dbReference type="PDBsum" id="5JBH"/>
<dbReference type="EMDB" id="EMD-8148"/>
<dbReference type="SMR" id="Q57902"/>
<dbReference type="FunCoup" id="Q57902">
    <property type="interactions" value="86"/>
</dbReference>
<dbReference type="STRING" id="243232.MJ_0463"/>
<dbReference type="PaxDb" id="243232-MJ_0463"/>
<dbReference type="EnsemblBacteria" id="AAB98452">
    <property type="protein sequence ID" value="AAB98452"/>
    <property type="gene ID" value="MJ_0463"/>
</dbReference>
<dbReference type="KEGG" id="mja:MJ_0463"/>
<dbReference type="eggNOG" id="arCOG04223">
    <property type="taxonomic scope" value="Archaea"/>
</dbReference>
<dbReference type="HOGENOM" id="CLU_082805_6_1_2"/>
<dbReference type="InParanoid" id="Q57902"/>
<dbReference type="PhylomeDB" id="Q57902"/>
<dbReference type="EvolutionaryTrace" id="Q57902"/>
<dbReference type="Proteomes" id="UP000000805">
    <property type="component" value="Chromosome"/>
</dbReference>
<dbReference type="GO" id="GO:0003743">
    <property type="term" value="F:translation initiation factor activity"/>
    <property type="evidence" value="ECO:0007669"/>
    <property type="project" value="InterPro"/>
</dbReference>
<dbReference type="GO" id="GO:0001731">
    <property type="term" value="P:formation of translation preinitiation complex"/>
    <property type="evidence" value="ECO:0000318"/>
    <property type="project" value="GO_Central"/>
</dbReference>
<dbReference type="GO" id="GO:0006417">
    <property type="term" value="P:regulation of translation"/>
    <property type="evidence" value="ECO:0007669"/>
    <property type="project" value="UniProtKB-UniRule"/>
</dbReference>
<dbReference type="GO" id="GO:0002188">
    <property type="term" value="P:translation reinitiation"/>
    <property type="evidence" value="ECO:0000318"/>
    <property type="project" value="GO_Central"/>
</dbReference>
<dbReference type="CDD" id="cd11567">
    <property type="entry name" value="YciH_like"/>
    <property type="match status" value="1"/>
</dbReference>
<dbReference type="Gene3D" id="3.30.780.10">
    <property type="entry name" value="SUI1-like domain"/>
    <property type="match status" value="1"/>
</dbReference>
<dbReference type="HAMAP" id="MF_00604">
    <property type="entry name" value="SUI1"/>
    <property type="match status" value="1"/>
</dbReference>
<dbReference type="InterPro" id="IPR050318">
    <property type="entry name" value="DENR/SUI1_TIF"/>
</dbReference>
<dbReference type="InterPro" id="IPR001950">
    <property type="entry name" value="SUI1"/>
</dbReference>
<dbReference type="InterPro" id="IPR022851">
    <property type="entry name" value="SUI1_arc"/>
</dbReference>
<dbReference type="InterPro" id="IPR005872">
    <property type="entry name" value="SUI1_arc_bac"/>
</dbReference>
<dbReference type="InterPro" id="IPR036877">
    <property type="entry name" value="SUI1_dom_sf"/>
</dbReference>
<dbReference type="NCBIfam" id="NF002096">
    <property type="entry name" value="PRK00939.1"/>
    <property type="match status" value="1"/>
</dbReference>
<dbReference type="NCBIfam" id="TIGR01158">
    <property type="entry name" value="SUI1_rel"/>
    <property type="match status" value="1"/>
</dbReference>
<dbReference type="PANTHER" id="PTHR12789:SF0">
    <property type="entry name" value="DENSITY-REGULATED PROTEIN"/>
    <property type="match status" value="1"/>
</dbReference>
<dbReference type="PANTHER" id="PTHR12789">
    <property type="entry name" value="DENSITY-REGULATED PROTEIN HOMOLOG"/>
    <property type="match status" value="1"/>
</dbReference>
<dbReference type="Pfam" id="PF01253">
    <property type="entry name" value="SUI1"/>
    <property type="match status" value="1"/>
</dbReference>
<dbReference type="PIRSF" id="PIRSF037511">
    <property type="entry name" value="Transl_init_SUI1_pro"/>
    <property type="match status" value="1"/>
</dbReference>
<dbReference type="SUPFAM" id="SSF55159">
    <property type="entry name" value="eIF1-like"/>
    <property type="match status" value="1"/>
</dbReference>
<dbReference type="PROSITE" id="PS50296">
    <property type="entry name" value="SUI1"/>
    <property type="match status" value="1"/>
</dbReference>
<name>SUI1_METJA</name>
<sequence>MMPEICPRCGLPKELCVCEEIAKEEQKIKIYVTKRRFGKLMTIIEGFDTSVIDLKELAKKLKDICACGGTVKDNTIELQGDHRKKVAEELVKMGFSRDSIEIR</sequence>
<evidence type="ECO:0000255" key="1">
    <source>
        <dbReference type="HAMAP-Rule" id="MF_00604"/>
    </source>
</evidence>
<evidence type="ECO:0007829" key="2">
    <source>
        <dbReference type="PDB" id="4MO0"/>
    </source>
</evidence>
<keyword id="KW-0002">3D-structure</keyword>
<keyword id="KW-0648">Protein biosynthesis</keyword>
<keyword id="KW-1185">Reference proteome</keyword>
<keyword id="KW-0810">Translation regulation</keyword>
<protein>
    <recommendedName>
        <fullName evidence="1">Protein translation factor SUI1 homolog</fullName>
    </recommendedName>
</protein>
<feature type="chain" id="PRO_0000130580" description="Protein translation factor SUI1 homolog">
    <location>
        <begin position="1"/>
        <end position="103"/>
    </location>
</feature>
<feature type="strand" evidence="2">
    <location>
        <begin position="28"/>
        <end position="34"/>
    </location>
</feature>
<feature type="strand" evidence="2">
    <location>
        <begin position="40"/>
        <end position="45"/>
    </location>
</feature>
<feature type="turn" evidence="2">
    <location>
        <begin position="49"/>
        <end position="51"/>
    </location>
</feature>
<feature type="helix" evidence="2">
    <location>
        <begin position="54"/>
        <end position="65"/>
    </location>
</feature>
<feature type="strand" evidence="2">
    <location>
        <begin position="69"/>
        <end position="72"/>
    </location>
</feature>
<feature type="strand" evidence="2">
    <location>
        <begin position="75"/>
        <end position="80"/>
    </location>
</feature>
<feature type="helix" evidence="2">
    <location>
        <begin position="83"/>
        <end position="92"/>
    </location>
</feature>
<feature type="helix" evidence="2">
    <location>
        <begin position="97"/>
        <end position="99"/>
    </location>
</feature>
<feature type="strand" evidence="2">
    <location>
        <begin position="100"/>
        <end position="102"/>
    </location>
</feature>
<reference key="1">
    <citation type="journal article" date="1996" name="Science">
        <title>Complete genome sequence of the methanogenic archaeon, Methanococcus jannaschii.</title>
        <authorList>
            <person name="Bult C.J."/>
            <person name="White O."/>
            <person name="Olsen G.J."/>
            <person name="Zhou L."/>
            <person name="Fleischmann R.D."/>
            <person name="Sutton G.G."/>
            <person name="Blake J.A."/>
            <person name="FitzGerald L.M."/>
            <person name="Clayton R.A."/>
            <person name="Gocayne J.D."/>
            <person name="Kerlavage A.R."/>
            <person name="Dougherty B.A."/>
            <person name="Tomb J.-F."/>
            <person name="Adams M.D."/>
            <person name="Reich C.I."/>
            <person name="Overbeek R."/>
            <person name="Kirkness E.F."/>
            <person name="Weinstock K.G."/>
            <person name="Merrick J.M."/>
            <person name="Glodek A."/>
            <person name="Scott J.L."/>
            <person name="Geoghagen N.S.M."/>
            <person name="Weidman J.F."/>
            <person name="Fuhrmann J.L."/>
            <person name="Nguyen D."/>
            <person name="Utterback T.R."/>
            <person name="Kelley J.M."/>
            <person name="Peterson J.D."/>
            <person name="Sadow P.W."/>
            <person name="Hanna M.C."/>
            <person name="Cotton M.D."/>
            <person name="Roberts K.M."/>
            <person name="Hurst M.A."/>
            <person name="Kaine B.P."/>
            <person name="Borodovsky M."/>
            <person name="Klenk H.-P."/>
            <person name="Fraser C.M."/>
            <person name="Smith H.O."/>
            <person name="Woese C.R."/>
            <person name="Venter J.C."/>
        </authorList>
    </citation>
    <scope>NUCLEOTIDE SEQUENCE [LARGE SCALE GENOMIC DNA]</scope>
    <source>
        <strain>ATCC 43067 / DSM 2661 / JAL-1 / JCM 10045 / NBRC 100440</strain>
    </source>
</reference>
<gene>
    <name type="ordered locus">MJ0463</name>
</gene>
<organism>
    <name type="scientific">Methanocaldococcus jannaschii (strain ATCC 43067 / DSM 2661 / JAL-1 / JCM 10045 / NBRC 100440)</name>
    <name type="common">Methanococcus jannaschii</name>
    <dbReference type="NCBI Taxonomy" id="243232"/>
    <lineage>
        <taxon>Archaea</taxon>
        <taxon>Methanobacteriati</taxon>
        <taxon>Methanobacteriota</taxon>
        <taxon>Methanomada group</taxon>
        <taxon>Methanococci</taxon>
        <taxon>Methanococcales</taxon>
        <taxon>Methanocaldococcaceae</taxon>
        <taxon>Methanocaldococcus</taxon>
    </lineage>
</organism>
<comment type="similarity">
    <text evidence="1">Belongs to the SUI1 family.</text>
</comment>
<accession>Q57902</accession>